<feature type="chain" id="PRO_0000138550" description="Peptide methionine sulfoxide reductase MsrA">
    <location>
        <begin position="1"/>
        <end position="212"/>
    </location>
</feature>
<feature type="region of interest" description="Disordered" evidence="2">
    <location>
        <begin position="1"/>
        <end position="21"/>
    </location>
</feature>
<feature type="compositionally biased region" description="Polar residues" evidence="2">
    <location>
        <begin position="1"/>
        <end position="14"/>
    </location>
</feature>
<feature type="active site" evidence="1">
    <location>
        <position position="52"/>
    </location>
</feature>
<organism>
    <name type="scientific">Pectobacterium atrosepticum (strain SCRI 1043 / ATCC BAA-672)</name>
    <name type="common">Erwinia carotovora subsp. atroseptica</name>
    <dbReference type="NCBI Taxonomy" id="218491"/>
    <lineage>
        <taxon>Bacteria</taxon>
        <taxon>Pseudomonadati</taxon>
        <taxon>Pseudomonadota</taxon>
        <taxon>Gammaproteobacteria</taxon>
        <taxon>Enterobacterales</taxon>
        <taxon>Pectobacteriaceae</taxon>
        <taxon>Pectobacterium</taxon>
    </lineage>
</organism>
<dbReference type="EC" id="1.8.4.11" evidence="1"/>
<dbReference type="EMBL" id="BX950851">
    <property type="protein sequence ID" value="CAG76495.1"/>
    <property type="molecule type" value="Genomic_DNA"/>
</dbReference>
<dbReference type="RefSeq" id="WP_011095100.1">
    <property type="nucleotide sequence ID" value="NC_004547.2"/>
</dbReference>
<dbReference type="SMR" id="Q6D151"/>
<dbReference type="STRING" id="218491.ECA3597"/>
<dbReference type="GeneID" id="57210271"/>
<dbReference type="KEGG" id="eca:ECA3597"/>
<dbReference type="PATRIC" id="fig|218491.5.peg.3648"/>
<dbReference type="eggNOG" id="COG0225">
    <property type="taxonomic scope" value="Bacteria"/>
</dbReference>
<dbReference type="HOGENOM" id="CLU_031040_10_3_6"/>
<dbReference type="OrthoDB" id="4174719at2"/>
<dbReference type="Proteomes" id="UP000007966">
    <property type="component" value="Chromosome"/>
</dbReference>
<dbReference type="GO" id="GO:0005737">
    <property type="term" value="C:cytoplasm"/>
    <property type="evidence" value="ECO:0007669"/>
    <property type="project" value="TreeGrafter"/>
</dbReference>
<dbReference type="GO" id="GO:0036456">
    <property type="term" value="F:L-methionine-(S)-S-oxide reductase activity"/>
    <property type="evidence" value="ECO:0007669"/>
    <property type="project" value="TreeGrafter"/>
</dbReference>
<dbReference type="GO" id="GO:0008113">
    <property type="term" value="F:peptide-methionine (S)-S-oxide reductase activity"/>
    <property type="evidence" value="ECO:0007669"/>
    <property type="project" value="UniProtKB-UniRule"/>
</dbReference>
<dbReference type="GO" id="GO:0034599">
    <property type="term" value="P:cellular response to oxidative stress"/>
    <property type="evidence" value="ECO:0007669"/>
    <property type="project" value="TreeGrafter"/>
</dbReference>
<dbReference type="GO" id="GO:0036211">
    <property type="term" value="P:protein modification process"/>
    <property type="evidence" value="ECO:0007669"/>
    <property type="project" value="UniProtKB-UniRule"/>
</dbReference>
<dbReference type="FunFam" id="3.30.1060.10:FF:000001">
    <property type="entry name" value="Peptide methionine sulfoxide reductase MsrA"/>
    <property type="match status" value="1"/>
</dbReference>
<dbReference type="Gene3D" id="3.30.1060.10">
    <property type="entry name" value="Peptide methionine sulphoxide reductase MsrA"/>
    <property type="match status" value="1"/>
</dbReference>
<dbReference type="HAMAP" id="MF_01401">
    <property type="entry name" value="MsrA"/>
    <property type="match status" value="1"/>
</dbReference>
<dbReference type="InterPro" id="IPR002569">
    <property type="entry name" value="Met_Sox_Rdtase_MsrA_dom"/>
</dbReference>
<dbReference type="InterPro" id="IPR036509">
    <property type="entry name" value="Met_Sox_Rdtase_MsrA_sf"/>
</dbReference>
<dbReference type="InterPro" id="IPR050162">
    <property type="entry name" value="MsrA_MetSO_reductase"/>
</dbReference>
<dbReference type="NCBIfam" id="TIGR00401">
    <property type="entry name" value="msrA"/>
    <property type="match status" value="1"/>
</dbReference>
<dbReference type="PANTHER" id="PTHR42799">
    <property type="entry name" value="MITOCHONDRIAL PEPTIDE METHIONINE SULFOXIDE REDUCTASE"/>
    <property type="match status" value="1"/>
</dbReference>
<dbReference type="PANTHER" id="PTHR42799:SF2">
    <property type="entry name" value="MITOCHONDRIAL PEPTIDE METHIONINE SULFOXIDE REDUCTASE"/>
    <property type="match status" value="1"/>
</dbReference>
<dbReference type="Pfam" id="PF01625">
    <property type="entry name" value="PMSR"/>
    <property type="match status" value="1"/>
</dbReference>
<dbReference type="SUPFAM" id="SSF55068">
    <property type="entry name" value="Peptide methionine sulfoxide reductase"/>
    <property type="match status" value="1"/>
</dbReference>
<keyword id="KW-0560">Oxidoreductase</keyword>
<keyword id="KW-1185">Reference proteome</keyword>
<sequence length="212" mass="23575">MNSIDKTQRITQSDALPGRSTPMPVARLHVVHEHSMTHVPDHMSVAIFAMGCFWGAERLFWQQPGIYSTAAGYIGGYTPNPTYREVCSGQTDHAEAVRVVFDPATISYSQLLQLFWENHDPAQGMRQGGDIGSQYRSAIYTLTPEQEQAAQASLQRFQQAMRENSDGRAISTEIEPAGPFYYAEEDHQQYLHKNPNGYCGLGGIGVCLPPPR</sequence>
<proteinExistence type="inferred from homology"/>
<name>MSRA_PECAS</name>
<accession>Q6D151</accession>
<protein>
    <recommendedName>
        <fullName evidence="1">Peptide methionine sulfoxide reductase MsrA</fullName>
        <shortName evidence="1">Protein-methionine-S-oxide reductase</shortName>
        <ecNumber evidence="1">1.8.4.11</ecNumber>
    </recommendedName>
    <alternativeName>
        <fullName evidence="1">Peptide-methionine (S)-S-oxide reductase</fullName>
        <shortName evidence="1">Peptide Met(O) reductase</shortName>
    </alternativeName>
</protein>
<reference key="1">
    <citation type="journal article" date="2004" name="Proc. Natl. Acad. Sci. U.S.A.">
        <title>Genome sequence of the enterobacterial phytopathogen Erwinia carotovora subsp. atroseptica and characterization of virulence factors.</title>
        <authorList>
            <person name="Bell K.S."/>
            <person name="Sebaihia M."/>
            <person name="Pritchard L."/>
            <person name="Holden M.T.G."/>
            <person name="Hyman L.J."/>
            <person name="Holeva M.C."/>
            <person name="Thomson N.R."/>
            <person name="Bentley S.D."/>
            <person name="Churcher L.J.C."/>
            <person name="Mungall K."/>
            <person name="Atkin R."/>
            <person name="Bason N."/>
            <person name="Brooks K."/>
            <person name="Chillingworth T."/>
            <person name="Clark K."/>
            <person name="Doggett J."/>
            <person name="Fraser A."/>
            <person name="Hance Z."/>
            <person name="Hauser H."/>
            <person name="Jagels K."/>
            <person name="Moule S."/>
            <person name="Norbertczak H."/>
            <person name="Ormond D."/>
            <person name="Price C."/>
            <person name="Quail M.A."/>
            <person name="Sanders M."/>
            <person name="Walker D."/>
            <person name="Whitehead S."/>
            <person name="Salmond G.P.C."/>
            <person name="Birch P.R.J."/>
            <person name="Parkhill J."/>
            <person name="Toth I.K."/>
        </authorList>
    </citation>
    <scope>NUCLEOTIDE SEQUENCE [LARGE SCALE GENOMIC DNA]</scope>
    <source>
        <strain>SCRI 1043 / ATCC BAA-672</strain>
    </source>
</reference>
<evidence type="ECO:0000255" key="1">
    <source>
        <dbReference type="HAMAP-Rule" id="MF_01401"/>
    </source>
</evidence>
<evidence type="ECO:0000256" key="2">
    <source>
        <dbReference type="SAM" id="MobiDB-lite"/>
    </source>
</evidence>
<gene>
    <name evidence="1" type="primary">msrA</name>
    <name type="ordered locus">ECA3597</name>
</gene>
<comment type="function">
    <text evidence="1">Has an important function as a repair enzyme for proteins that have been inactivated by oxidation. Catalyzes the reversible oxidation-reduction of methionine sulfoxide in proteins to methionine.</text>
</comment>
<comment type="catalytic activity">
    <reaction evidence="1">
        <text>L-methionyl-[protein] + [thioredoxin]-disulfide + H2O = L-methionyl-(S)-S-oxide-[protein] + [thioredoxin]-dithiol</text>
        <dbReference type="Rhea" id="RHEA:14217"/>
        <dbReference type="Rhea" id="RHEA-COMP:10698"/>
        <dbReference type="Rhea" id="RHEA-COMP:10700"/>
        <dbReference type="Rhea" id="RHEA-COMP:12313"/>
        <dbReference type="Rhea" id="RHEA-COMP:12315"/>
        <dbReference type="ChEBI" id="CHEBI:15377"/>
        <dbReference type="ChEBI" id="CHEBI:16044"/>
        <dbReference type="ChEBI" id="CHEBI:29950"/>
        <dbReference type="ChEBI" id="CHEBI:44120"/>
        <dbReference type="ChEBI" id="CHEBI:50058"/>
        <dbReference type="EC" id="1.8.4.11"/>
    </reaction>
</comment>
<comment type="catalytic activity">
    <reaction evidence="1">
        <text>[thioredoxin]-disulfide + L-methionine + H2O = L-methionine (S)-S-oxide + [thioredoxin]-dithiol</text>
        <dbReference type="Rhea" id="RHEA:19993"/>
        <dbReference type="Rhea" id="RHEA-COMP:10698"/>
        <dbReference type="Rhea" id="RHEA-COMP:10700"/>
        <dbReference type="ChEBI" id="CHEBI:15377"/>
        <dbReference type="ChEBI" id="CHEBI:29950"/>
        <dbReference type="ChEBI" id="CHEBI:50058"/>
        <dbReference type="ChEBI" id="CHEBI:57844"/>
        <dbReference type="ChEBI" id="CHEBI:58772"/>
        <dbReference type="EC" id="1.8.4.11"/>
    </reaction>
</comment>
<comment type="similarity">
    <text evidence="1">Belongs to the MsrA Met sulfoxide reductase family.</text>
</comment>